<proteinExistence type="inferred from homology"/>
<keyword id="KW-0496">Mitochondrion</keyword>
<keyword id="KW-1185">Reference proteome</keyword>
<keyword id="KW-0809">Transit peptide</keyword>
<sequence>MPSICPKSAMISLPTVLQSIFAFEVAPQIRNSSVRSLNRSSLRHRLRSTRTITTVSIDSIPVPSAQKPDDRVTSPSEPSLTADKSTASDTSSSNPASKATSADNSGSARRTKTNTKTSNEKQASDHENKKNIKKSAKETTASNAPKPPKEKEPWQIQKEALKRKFPTGWAPPKKLSPDAMEGIRHLHHIAPDQFTTPVLAEEFKVSPEAIRRILKSKWRPSGEELEERRKRWEKRHDRIWSHLSELGLRPKVPDYGSDADAVLYKRKSKGV</sequence>
<reference key="1">
    <citation type="journal article" date="2005" name="Nature">
        <title>Sequencing of Aspergillus nidulans and comparative analysis with A. fumigatus and A. oryzae.</title>
        <authorList>
            <person name="Galagan J.E."/>
            <person name="Calvo S.E."/>
            <person name="Cuomo C."/>
            <person name="Ma L.-J."/>
            <person name="Wortman J.R."/>
            <person name="Batzoglou S."/>
            <person name="Lee S.-I."/>
            <person name="Bastuerkmen M."/>
            <person name="Spevak C.C."/>
            <person name="Clutterbuck J."/>
            <person name="Kapitonov V."/>
            <person name="Jurka J."/>
            <person name="Scazzocchio C."/>
            <person name="Farman M.L."/>
            <person name="Butler J."/>
            <person name="Purcell S."/>
            <person name="Harris S."/>
            <person name="Braus G.H."/>
            <person name="Draht O."/>
            <person name="Busch S."/>
            <person name="D'Enfert C."/>
            <person name="Bouchier C."/>
            <person name="Goldman G.H."/>
            <person name="Bell-Pedersen D."/>
            <person name="Griffiths-Jones S."/>
            <person name="Doonan J.H."/>
            <person name="Yu J."/>
            <person name="Vienken K."/>
            <person name="Pain A."/>
            <person name="Freitag M."/>
            <person name="Selker E.U."/>
            <person name="Archer D.B."/>
            <person name="Penalva M.A."/>
            <person name="Oakley B.R."/>
            <person name="Momany M."/>
            <person name="Tanaka T."/>
            <person name="Kumagai T."/>
            <person name="Asai K."/>
            <person name="Machida M."/>
            <person name="Nierman W.C."/>
            <person name="Denning D.W."/>
            <person name="Caddick M.X."/>
            <person name="Hynes M."/>
            <person name="Paoletti M."/>
            <person name="Fischer R."/>
            <person name="Miller B.L."/>
            <person name="Dyer P.S."/>
            <person name="Sachs M.S."/>
            <person name="Osmani S.A."/>
            <person name="Birren B.W."/>
        </authorList>
    </citation>
    <scope>NUCLEOTIDE SEQUENCE [LARGE SCALE GENOMIC DNA]</scope>
    <source>
        <strain>FGSC A4 / ATCC 38163 / CBS 112.46 / NRRL 194 / M139</strain>
    </source>
</reference>
<reference key="2">
    <citation type="journal article" date="2009" name="Fungal Genet. Biol.">
        <title>The 2008 update of the Aspergillus nidulans genome annotation: a community effort.</title>
        <authorList>
            <person name="Wortman J.R."/>
            <person name="Gilsenan J.M."/>
            <person name="Joardar V."/>
            <person name="Deegan J."/>
            <person name="Clutterbuck J."/>
            <person name="Andersen M.R."/>
            <person name="Archer D."/>
            <person name="Bencina M."/>
            <person name="Braus G."/>
            <person name="Coutinho P."/>
            <person name="von Dohren H."/>
            <person name="Doonan J."/>
            <person name="Driessen A.J."/>
            <person name="Durek P."/>
            <person name="Espeso E."/>
            <person name="Fekete E."/>
            <person name="Flipphi M."/>
            <person name="Estrada C.G."/>
            <person name="Geysens S."/>
            <person name="Goldman G."/>
            <person name="de Groot P.W."/>
            <person name="Hansen K."/>
            <person name="Harris S.D."/>
            <person name="Heinekamp T."/>
            <person name="Helmstaedt K."/>
            <person name="Henrissat B."/>
            <person name="Hofmann G."/>
            <person name="Homan T."/>
            <person name="Horio T."/>
            <person name="Horiuchi H."/>
            <person name="James S."/>
            <person name="Jones M."/>
            <person name="Karaffa L."/>
            <person name="Karanyi Z."/>
            <person name="Kato M."/>
            <person name="Keller N."/>
            <person name="Kelly D.E."/>
            <person name="Kiel J.A."/>
            <person name="Kim J.M."/>
            <person name="van der Klei I.J."/>
            <person name="Klis F.M."/>
            <person name="Kovalchuk A."/>
            <person name="Krasevec N."/>
            <person name="Kubicek C.P."/>
            <person name="Liu B."/>
            <person name="Maccabe A."/>
            <person name="Meyer V."/>
            <person name="Mirabito P."/>
            <person name="Miskei M."/>
            <person name="Mos M."/>
            <person name="Mullins J."/>
            <person name="Nelson D.R."/>
            <person name="Nielsen J."/>
            <person name="Oakley B.R."/>
            <person name="Osmani S.A."/>
            <person name="Pakula T."/>
            <person name="Paszewski A."/>
            <person name="Paulsen I."/>
            <person name="Pilsyk S."/>
            <person name="Pocsi I."/>
            <person name="Punt P.J."/>
            <person name="Ram A.F."/>
            <person name="Ren Q."/>
            <person name="Robellet X."/>
            <person name="Robson G."/>
            <person name="Seiboth B."/>
            <person name="van Solingen P."/>
            <person name="Specht T."/>
            <person name="Sun J."/>
            <person name="Taheri-Talesh N."/>
            <person name="Takeshita N."/>
            <person name="Ussery D."/>
            <person name="vanKuyk P.A."/>
            <person name="Visser H."/>
            <person name="van de Vondervoort P.J."/>
            <person name="de Vries R.P."/>
            <person name="Walton J."/>
            <person name="Xiang X."/>
            <person name="Xiong Y."/>
            <person name="Zeng A.P."/>
            <person name="Brandt B.W."/>
            <person name="Cornell M.J."/>
            <person name="van den Hondel C.A."/>
            <person name="Visser J."/>
            <person name="Oliver S.G."/>
            <person name="Turner G."/>
        </authorList>
    </citation>
    <scope>GENOME REANNOTATION</scope>
    <source>
        <strain>FGSC A4 / ATCC 38163 / CBS 112.46 / NRRL 194 / M139</strain>
    </source>
</reference>
<dbReference type="EMBL" id="AACD01000107">
    <property type="protein sequence ID" value="EAA58674.1"/>
    <property type="molecule type" value="Genomic_DNA"/>
</dbReference>
<dbReference type="EMBL" id="BN001301">
    <property type="protein sequence ID" value="CBF69771.1"/>
    <property type="molecule type" value="Genomic_DNA"/>
</dbReference>
<dbReference type="RefSeq" id="XP_663894.1">
    <property type="nucleotide sequence ID" value="XM_658802.1"/>
</dbReference>
<dbReference type="SMR" id="Q5AZJ0"/>
<dbReference type="STRING" id="227321.Q5AZJ0"/>
<dbReference type="EnsemblFungi" id="CBF69771">
    <property type="protein sequence ID" value="CBF69771"/>
    <property type="gene ID" value="ANIA_06290"/>
</dbReference>
<dbReference type="KEGG" id="ani:ANIA_06290"/>
<dbReference type="VEuPathDB" id="FungiDB:AN6290"/>
<dbReference type="eggNOG" id="ENOG502S7IA">
    <property type="taxonomic scope" value="Eukaryota"/>
</dbReference>
<dbReference type="HOGENOM" id="CLU_047598_3_0_1"/>
<dbReference type="InParanoid" id="Q5AZJ0"/>
<dbReference type="OMA" id="AFCAHSA"/>
<dbReference type="OrthoDB" id="5578174at2759"/>
<dbReference type="Proteomes" id="UP000000560">
    <property type="component" value="Chromosome I"/>
</dbReference>
<dbReference type="GO" id="GO:0005739">
    <property type="term" value="C:mitochondrion"/>
    <property type="evidence" value="ECO:0007669"/>
    <property type="project" value="UniProtKB-SubCell"/>
</dbReference>
<dbReference type="GO" id="GO:0005634">
    <property type="term" value="C:nucleus"/>
    <property type="evidence" value="ECO:0000318"/>
    <property type="project" value="GO_Central"/>
</dbReference>
<dbReference type="InterPro" id="IPR010487">
    <property type="entry name" value="NGRN/Rrg9"/>
</dbReference>
<dbReference type="PANTHER" id="PTHR13475">
    <property type="entry name" value="NEUGRIN"/>
    <property type="match status" value="1"/>
</dbReference>
<dbReference type="PANTHER" id="PTHR13475:SF3">
    <property type="entry name" value="NEUGRIN"/>
    <property type="match status" value="1"/>
</dbReference>
<dbReference type="Pfam" id="PF06413">
    <property type="entry name" value="Neugrin"/>
    <property type="match status" value="1"/>
</dbReference>
<gene>
    <name type="primary">rrg9</name>
    <name type="ORF">AN6290</name>
</gene>
<comment type="function">
    <text evidence="1">Required for respiratory activity and maintenance and expression of the mitochondrial genome.</text>
</comment>
<comment type="subcellular location">
    <subcellularLocation>
        <location evidence="1">Mitochondrion</location>
    </subcellularLocation>
</comment>
<comment type="similarity">
    <text evidence="4">Belongs to the RRG9 family.</text>
</comment>
<feature type="transit peptide" description="Mitochondrion" evidence="2">
    <location>
        <begin position="1"/>
        <end position="59"/>
    </location>
</feature>
<feature type="chain" id="PRO_0000407947" description="Required for respiratory growth protein 9, mitochondrial">
    <location>
        <begin position="60"/>
        <end position="271"/>
    </location>
</feature>
<feature type="region of interest" description="Disordered" evidence="3">
    <location>
        <begin position="57"/>
        <end position="177"/>
    </location>
</feature>
<feature type="compositionally biased region" description="Low complexity" evidence="3">
    <location>
        <begin position="79"/>
        <end position="99"/>
    </location>
</feature>
<feature type="compositionally biased region" description="Polar residues" evidence="3">
    <location>
        <begin position="100"/>
        <end position="117"/>
    </location>
</feature>
<feature type="compositionally biased region" description="Basic and acidic residues" evidence="3">
    <location>
        <begin position="118"/>
        <end position="130"/>
    </location>
</feature>
<protein>
    <recommendedName>
        <fullName>Required for respiratory growth protein 9, mitochondrial</fullName>
    </recommendedName>
</protein>
<evidence type="ECO:0000250" key="1"/>
<evidence type="ECO:0000255" key="2"/>
<evidence type="ECO:0000256" key="3">
    <source>
        <dbReference type="SAM" id="MobiDB-lite"/>
    </source>
</evidence>
<evidence type="ECO:0000305" key="4"/>
<organism>
    <name type="scientific">Emericella nidulans (strain FGSC A4 / ATCC 38163 / CBS 112.46 / NRRL 194 / M139)</name>
    <name type="common">Aspergillus nidulans</name>
    <dbReference type="NCBI Taxonomy" id="227321"/>
    <lineage>
        <taxon>Eukaryota</taxon>
        <taxon>Fungi</taxon>
        <taxon>Dikarya</taxon>
        <taxon>Ascomycota</taxon>
        <taxon>Pezizomycotina</taxon>
        <taxon>Eurotiomycetes</taxon>
        <taxon>Eurotiomycetidae</taxon>
        <taxon>Eurotiales</taxon>
        <taxon>Aspergillaceae</taxon>
        <taxon>Aspergillus</taxon>
        <taxon>Aspergillus subgen. Nidulantes</taxon>
    </lineage>
</organism>
<accession>Q5AZJ0</accession>
<accession>C8V1A2</accession>
<name>RRG9_EMENI</name>